<evidence type="ECO:0000255" key="1"/>
<proteinExistence type="inferred from homology"/>
<keyword id="KW-1185">Reference proteome</keyword>
<keyword id="KW-0732">Signal</keyword>
<sequence>MSKVAALGWGTLVYLGVGLLLAIYPPFVTDKPLGRVCFITAAVCLWLLYV</sequence>
<gene>
    <name type="ORF">DDB_G0292256</name>
</gene>
<name>Y1628_DICDI</name>
<accession>Q54DI5</accession>
<reference key="1">
    <citation type="journal article" date="2005" name="Nature">
        <title>The genome of the social amoeba Dictyostelium discoideum.</title>
        <authorList>
            <person name="Eichinger L."/>
            <person name="Pachebat J.A."/>
            <person name="Gloeckner G."/>
            <person name="Rajandream M.A."/>
            <person name="Sucgang R."/>
            <person name="Berriman M."/>
            <person name="Song J."/>
            <person name="Olsen R."/>
            <person name="Szafranski K."/>
            <person name="Xu Q."/>
            <person name="Tunggal B."/>
            <person name="Kummerfeld S."/>
            <person name="Madera M."/>
            <person name="Konfortov B.A."/>
            <person name="Rivero F."/>
            <person name="Bankier A.T."/>
            <person name="Lehmann R."/>
            <person name="Hamlin N."/>
            <person name="Davies R."/>
            <person name="Gaudet P."/>
            <person name="Fey P."/>
            <person name="Pilcher K."/>
            <person name="Chen G."/>
            <person name="Saunders D."/>
            <person name="Sodergren E.J."/>
            <person name="Davis P."/>
            <person name="Kerhornou A."/>
            <person name="Nie X."/>
            <person name="Hall N."/>
            <person name="Anjard C."/>
            <person name="Hemphill L."/>
            <person name="Bason N."/>
            <person name="Farbrother P."/>
            <person name="Desany B."/>
            <person name="Just E."/>
            <person name="Morio T."/>
            <person name="Rost R."/>
            <person name="Churcher C.M."/>
            <person name="Cooper J."/>
            <person name="Haydock S."/>
            <person name="van Driessche N."/>
            <person name="Cronin A."/>
            <person name="Goodhead I."/>
            <person name="Muzny D.M."/>
            <person name="Mourier T."/>
            <person name="Pain A."/>
            <person name="Lu M."/>
            <person name="Harper D."/>
            <person name="Lindsay R."/>
            <person name="Hauser H."/>
            <person name="James K.D."/>
            <person name="Quiles M."/>
            <person name="Madan Babu M."/>
            <person name="Saito T."/>
            <person name="Buchrieser C."/>
            <person name="Wardroper A."/>
            <person name="Felder M."/>
            <person name="Thangavelu M."/>
            <person name="Johnson D."/>
            <person name="Knights A."/>
            <person name="Loulseged H."/>
            <person name="Mungall K.L."/>
            <person name="Oliver K."/>
            <person name="Price C."/>
            <person name="Quail M.A."/>
            <person name="Urushihara H."/>
            <person name="Hernandez J."/>
            <person name="Rabbinowitsch E."/>
            <person name="Steffen D."/>
            <person name="Sanders M."/>
            <person name="Ma J."/>
            <person name="Kohara Y."/>
            <person name="Sharp S."/>
            <person name="Simmonds M.N."/>
            <person name="Spiegler S."/>
            <person name="Tivey A."/>
            <person name="Sugano S."/>
            <person name="White B."/>
            <person name="Walker D."/>
            <person name="Woodward J.R."/>
            <person name="Winckler T."/>
            <person name="Tanaka Y."/>
            <person name="Shaulsky G."/>
            <person name="Schleicher M."/>
            <person name="Weinstock G.M."/>
            <person name="Rosenthal A."/>
            <person name="Cox E.C."/>
            <person name="Chisholm R.L."/>
            <person name="Gibbs R.A."/>
            <person name="Loomis W.F."/>
            <person name="Platzer M."/>
            <person name="Kay R.R."/>
            <person name="Williams J.G."/>
            <person name="Dear P.H."/>
            <person name="Noegel A.A."/>
            <person name="Barrell B.G."/>
            <person name="Kuspa A."/>
        </authorList>
    </citation>
    <scope>NUCLEOTIDE SEQUENCE [LARGE SCALE GENOMIC DNA]</scope>
    <source>
        <strain>AX4</strain>
    </source>
</reference>
<feature type="signal peptide" evidence="1">
    <location>
        <begin position="1"/>
        <end position="22"/>
    </location>
</feature>
<feature type="chain" id="PRO_0000344386" description="Uncharacterized protein DDB_G0292256">
    <location>
        <begin position="23"/>
        <end position="50"/>
    </location>
</feature>
<protein>
    <recommendedName>
        <fullName>Uncharacterized protein DDB_G0292256</fullName>
    </recommendedName>
</protein>
<organism>
    <name type="scientific">Dictyostelium discoideum</name>
    <name type="common">Social amoeba</name>
    <dbReference type="NCBI Taxonomy" id="44689"/>
    <lineage>
        <taxon>Eukaryota</taxon>
        <taxon>Amoebozoa</taxon>
        <taxon>Evosea</taxon>
        <taxon>Eumycetozoa</taxon>
        <taxon>Dictyostelia</taxon>
        <taxon>Dictyosteliales</taxon>
        <taxon>Dictyosteliaceae</taxon>
        <taxon>Dictyostelium</taxon>
    </lineage>
</organism>
<dbReference type="EMBL" id="AAFI02000188">
    <property type="protein sequence ID" value="EAL61338.1"/>
    <property type="molecule type" value="Genomic_DNA"/>
</dbReference>
<dbReference type="RefSeq" id="XP_629742.1">
    <property type="nucleotide sequence ID" value="XM_629740.1"/>
</dbReference>
<dbReference type="SMR" id="Q54DI5"/>
<dbReference type="FunCoup" id="Q54DI5">
    <property type="interactions" value="108"/>
</dbReference>
<dbReference type="PaxDb" id="44689-DDB0305124"/>
<dbReference type="EnsemblProtists" id="EAL61338">
    <property type="protein sequence ID" value="EAL61338"/>
    <property type="gene ID" value="DDB_G0292256"/>
</dbReference>
<dbReference type="GeneID" id="8628571"/>
<dbReference type="KEGG" id="ddi:DDB_G0292256"/>
<dbReference type="dictyBase" id="DDB_G0292256"/>
<dbReference type="InParanoid" id="Q54DI5"/>
<dbReference type="PRO" id="PR:Q54DI5"/>
<dbReference type="Proteomes" id="UP000002195">
    <property type="component" value="Chromosome 6"/>
</dbReference>